<sequence length="327" mass="34796">MDAAWRGGVGCSPVCLDLCVGLSPVREPSAARHELLDRPAGCRGGGDSKSMTNDEAKILEAKVTQMSEENRRLTEVIARLYGGQIARLGLDGSASPPRPVSPLSGKKRSRESMETANSCDANSNRHQGGDADHAESFAADDGTCRRIKVSRVCRRIDPSDTSLVVKDGYQWRKYGQKVTRDNPSPRAYFRCAFAPSCPVKKKVQRSAEDSSLLVATYEGEHNHPHPSPRAGELPAAVGGAGGSLPCSISINSSGPTITLDLTKNGGAVQVVEAAHPPPPPDLKEVCREVASPEFRTALVEQMASALTSDPKFTGALAAAILQKLPEF</sequence>
<organism>
    <name type="scientific">Oryza sativa subsp. indica</name>
    <name type="common">Rice</name>
    <dbReference type="NCBI Taxonomy" id="39946"/>
    <lineage>
        <taxon>Eukaryota</taxon>
        <taxon>Viridiplantae</taxon>
        <taxon>Streptophyta</taxon>
        <taxon>Embryophyta</taxon>
        <taxon>Tracheophyta</taxon>
        <taxon>Spermatophyta</taxon>
        <taxon>Magnoliopsida</taxon>
        <taxon>Liliopsida</taxon>
        <taxon>Poales</taxon>
        <taxon>Poaceae</taxon>
        <taxon>BOP clade</taxon>
        <taxon>Oryzoideae</taxon>
        <taxon>Oryzeae</taxon>
        <taxon>Oryzinae</taxon>
        <taxon>Oryza</taxon>
        <taxon>Oryza sativa</taxon>
    </lineage>
</organism>
<evidence type="ECO:0000250" key="1">
    <source>
        <dbReference type="UniProtKB" id="Q6EPZ2"/>
    </source>
</evidence>
<evidence type="ECO:0000250" key="2">
    <source>
        <dbReference type="UniProtKB" id="Q6QHD1"/>
    </source>
</evidence>
<evidence type="ECO:0000255" key="3"/>
<evidence type="ECO:0000255" key="4">
    <source>
        <dbReference type="PROSITE-ProRule" id="PRU00223"/>
    </source>
</evidence>
<evidence type="ECO:0000256" key="5">
    <source>
        <dbReference type="SAM" id="MobiDB-lite"/>
    </source>
</evidence>
<evidence type="ECO:0000269" key="6">
    <source>
    </source>
</evidence>
<evidence type="ECO:0000303" key="7">
    <source>
    </source>
</evidence>
<evidence type="ECO:0000305" key="8"/>
<evidence type="ECO:0000312" key="9">
    <source>
        <dbReference type="EMBL" id="EAZ09114.1"/>
    </source>
</evidence>
<proteinExistence type="evidence at transcript level"/>
<accession>Q6IEK5</accession>
<protein>
    <recommendedName>
        <fullName evidence="7">WRKY transcription factor WRKY76</fullName>
        <shortName evidence="7">OsWRKY76</shortName>
    </recommendedName>
</protein>
<gene>
    <name evidence="7" type="primary">WRKY76</name>
    <name evidence="9" type="ORF">OsI_31379</name>
</gene>
<feature type="chain" id="PRO_0000436961" description="WRKY transcription factor WRKY76">
    <location>
        <begin position="1"/>
        <end position="327"/>
    </location>
</feature>
<feature type="DNA-binding region" description="WRKY" evidence="4">
    <location>
        <begin position="160"/>
        <end position="226"/>
    </location>
</feature>
<feature type="region of interest" description="Disordered" evidence="5">
    <location>
        <begin position="88"/>
        <end position="134"/>
    </location>
</feature>
<feature type="coiled-coil region" evidence="3">
    <location>
        <begin position="56"/>
        <end position="76"/>
    </location>
</feature>
<feature type="short sequence motif" description="Nuclear localization signal" evidence="3">
    <location>
        <begin position="106"/>
        <end position="112"/>
    </location>
</feature>
<feature type="compositionally biased region" description="Polar residues" evidence="5">
    <location>
        <begin position="114"/>
        <end position="126"/>
    </location>
</feature>
<comment type="function">
    <text evidence="1 2">Transcription repressor. Interacts specifically with the W box (5'-(T)TGAC[CT]-3'), a frequently occurring elicitor-responsive cis-acting element. Regulates, probably indirectly, the activation of defense-related genes during defense response (By similarity). Modulates plant innate immunity against X.oryzae pv. oryzae (Xoo) (By similarity).</text>
</comment>
<comment type="subcellular location">
    <subcellularLocation>
        <location evidence="2 4">Nucleus</location>
    </subcellularLocation>
</comment>
<comment type="induction">
    <text evidence="1 6">Induced by biotic elicitors (e.g. fungal chitin oligosaccharide) (By similarity). Induced by pathogen infection (e.g. M.grisea and X.oryzae pv. oryzae (Xoo)) (PubMed:16528562). Accumulates after treatment with benzothiadiazole (BTH) and salicylic acid (SA) (By similarity).</text>
</comment>
<comment type="domain">
    <text evidence="2">The WRKY domain is required to bind DNA.</text>
</comment>
<comment type="similarity">
    <text evidence="8">Belongs to the WRKY group II-a family.</text>
</comment>
<keyword id="KW-0175">Coiled coil</keyword>
<keyword id="KW-0238">DNA-binding</keyword>
<keyword id="KW-0539">Nucleus</keyword>
<keyword id="KW-1185">Reference proteome</keyword>
<keyword id="KW-0804">Transcription</keyword>
<keyword id="KW-0805">Transcription regulation</keyword>
<reference key="1">
    <citation type="journal article" date="2004" name="Plant Physiol.">
        <title>A rice WRKY gene encodes a transcriptional repressor of the gibberellin signaling pathway in aleurone cells.</title>
        <authorList>
            <person name="Zhang Z.-L."/>
            <person name="Xie Z."/>
            <person name="Zou X."/>
            <person name="Casaretto J."/>
            <person name="Ho T.-H.D."/>
            <person name="Shen Q.J."/>
        </authorList>
    </citation>
    <scope>NUCLEOTIDE SEQUENCE [GENOMIC DNA]</scope>
</reference>
<reference key="2">
    <citation type="journal article" date="2005" name="PLoS Biol.">
        <title>The genomes of Oryza sativa: a history of duplications.</title>
        <authorList>
            <person name="Yu J."/>
            <person name="Wang J."/>
            <person name="Lin W."/>
            <person name="Li S."/>
            <person name="Li H."/>
            <person name="Zhou J."/>
            <person name="Ni P."/>
            <person name="Dong W."/>
            <person name="Hu S."/>
            <person name="Zeng C."/>
            <person name="Zhang J."/>
            <person name="Zhang Y."/>
            <person name="Li R."/>
            <person name="Xu Z."/>
            <person name="Li S."/>
            <person name="Li X."/>
            <person name="Zheng H."/>
            <person name="Cong L."/>
            <person name="Lin L."/>
            <person name="Yin J."/>
            <person name="Geng J."/>
            <person name="Li G."/>
            <person name="Shi J."/>
            <person name="Liu J."/>
            <person name="Lv H."/>
            <person name="Li J."/>
            <person name="Wang J."/>
            <person name="Deng Y."/>
            <person name="Ran L."/>
            <person name="Shi X."/>
            <person name="Wang X."/>
            <person name="Wu Q."/>
            <person name="Li C."/>
            <person name="Ren X."/>
            <person name="Wang J."/>
            <person name="Wang X."/>
            <person name="Li D."/>
            <person name="Liu D."/>
            <person name="Zhang X."/>
            <person name="Ji Z."/>
            <person name="Zhao W."/>
            <person name="Sun Y."/>
            <person name="Zhang Z."/>
            <person name="Bao J."/>
            <person name="Han Y."/>
            <person name="Dong L."/>
            <person name="Ji J."/>
            <person name="Chen P."/>
            <person name="Wu S."/>
            <person name="Liu J."/>
            <person name="Xiao Y."/>
            <person name="Bu D."/>
            <person name="Tan J."/>
            <person name="Yang L."/>
            <person name="Ye C."/>
            <person name="Zhang J."/>
            <person name="Xu J."/>
            <person name="Zhou Y."/>
            <person name="Yu Y."/>
            <person name="Zhang B."/>
            <person name="Zhuang S."/>
            <person name="Wei H."/>
            <person name="Liu B."/>
            <person name="Lei M."/>
            <person name="Yu H."/>
            <person name="Li Y."/>
            <person name="Xu H."/>
            <person name="Wei S."/>
            <person name="He X."/>
            <person name="Fang L."/>
            <person name="Zhang Z."/>
            <person name="Zhang Y."/>
            <person name="Huang X."/>
            <person name="Su Z."/>
            <person name="Tong W."/>
            <person name="Li J."/>
            <person name="Tong Z."/>
            <person name="Li S."/>
            <person name="Ye J."/>
            <person name="Wang L."/>
            <person name="Fang L."/>
            <person name="Lei T."/>
            <person name="Chen C.-S."/>
            <person name="Chen H.-C."/>
            <person name="Xu Z."/>
            <person name="Li H."/>
            <person name="Huang H."/>
            <person name="Zhang F."/>
            <person name="Xu H."/>
            <person name="Li N."/>
            <person name="Zhao C."/>
            <person name="Li S."/>
            <person name="Dong L."/>
            <person name="Huang Y."/>
            <person name="Li L."/>
            <person name="Xi Y."/>
            <person name="Qi Q."/>
            <person name="Li W."/>
            <person name="Zhang B."/>
            <person name="Hu W."/>
            <person name="Zhang Y."/>
            <person name="Tian X."/>
            <person name="Jiao Y."/>
            <person name="Liang X."/>
            <person name="Jin J."/>
            <person name="Gao L."/>
            <person name="Zheng W."/>
            <person name="Hao B."/>
            <person name="Liu S.-M."/>
            <person name="Wang W."/>
            <person name="Yuan L."/>
            <person name="Cao M."/>
            <person name="McDermott J."/>
            <person name="Samudrala R."/>
            <person name="Wang J."/>
            <person name="Wong G.K.-S."/>
            <person name="Yang H."/>
        </authorList>
    </citation>
    <scope>NUCLEOTIDE SEQUENCE [LARGE SCALE GENOMIC DNA]</scope>
    <source>
        <strain>cv. 93-11</strain>
    </source>
</reference>
<reference key="3">
    <citation type="journal article" date="2006" name="Plant Cell Rep.">
        <title>A comprehensive expression analysis of the WRKY gene superfamily in rice plants during defense response.</title>
        <authorList>
            <person name="Ryu H.-S."/>
            <person name="Han M."/>
            <person name="Lee S.-K."/>
            <person name="Cho J.-I."/>
            <person name="Ryoo N."/>
            <person name="Heu S."/>
            <person name="Lee Y.-H."/>
            <person name="Bhoo S.H."/>
            <person name="Wang G.-L."/>
            <person name="Hahn T.-R."/>
            <person name="Jeon J.-S."/>
        </authorList>
    </citation>
    <scope>INDUCTION BY MAGNAPORTHE GRISEA AND XANTHOMONAS ORYZAE</scope>
</reference>
<dbReference type="EMBL" id="BK005079">
    <property type="protein sequence ID" value="DAA05141.1"/>
    <property type="molecule type" value="Genomic_DNA"/>
</dbReference>
<dbReference type="EMBL" id="CM000134">
    <property type="protein sequence ID" value="EAZ09114.1"/>
    <property type="molecule type" value="Genomic_DNA"/>
</dbReference>
<dbReference type="SMR" id="Q6IEK5"/>
<dbReference type="STRING" id="39946.Q6IEK5"/>
<dbReference type="EnsemblPlants" id="BGIOSGA029758-TA">
    <property type="protein sequence ID" value="BGIOSGA029758-PA"/>
    <property type="gene ID" value="BGIOSGA029758"/>
</dbReference>
<dbReference type="EnsemblPlants" id="OsGoSa_09g0010450.01">
    <property type="protein sequence ID" value="OsGoSa_09g0010450.01"/>
    <property type="gene ID" value="OsGoSa_09g0010450"/>
</dbReference>
<dbReference type="EnsemblPlants" id="OsIR64_09g0010540.01">
    <property type="protein sequence ID" value="OsIR64_09g0010540.01"/>
    <property type="gene ID" value="OsIR64_09g0010540"/>
</dbReference>
<dbReference type="EnsemblPlants" id="OsLaMu_09g0010310.01">
    <property type="protein sequence ID" value="OsLaMu_09g0010310.01"/>
    <property type="gene ID" value="OsLaMu_09g0010310"/>
</dbReference>
<dbReference type="EnsemblPlants" id="OsLima_09g0010510.01">
    <property type="protein sequence ID" value="OsLima_09g0010510.01"/>
    <property type="gene ID" value="OsLima_09g0010510"/>
</dbReference>
<dbReference type="EnsemblPlants" id="OsLiXu_09g0010250.01">
    <property type="protein sequence ID" value="OsLiXu_09g0010250.01"/>
    <property type="gene ID" value="OsLiXu_09g0010250"/>
</dbReference>
<dbReference type="EnsemblPlants" id="OsMH63_09G010890_01">
    <property type="protein sequence ID" value="OsMH63_09G010890_01"/>
    <property type="gene ID" value="OsMH63_09G010890"/>
</dbReference>
<dbReference type="EnsemblPlants" id="OsPr106_09g0010540.01">
    <property type="protein sequence ID" value="OsPr106_09g0010540.01"/>
    <property type="gene ID" value="OsPr106_09g0010540"/>
</dbReference>
<dbReference type="EnsemblPlants" id="OsZS97_09G010450_01">
    <property type="protein sequence ID" value="OsZS97_09G010450_01"/>
    <property type="gene ID" value="OsZS97_09G010450"/>
</dbReference>
<dbReference type="Gramene" id="BGIOSGA029758-TA">
    <property type="protein sequence ID" value="BGIOSGA029758-PA"/>
    <property type="gene ID" value="BGIOSGA029758"/>
</dbReference>
<dbReference type="Gramene" id="OsGoSa_09g0010450.01">
    <property type="protein sequence ID" value="OsGoSa_09g0010450.01"/>
    <property type="gene ID" value="OsGoSa_09g0010450"/>
</dbReference>
<dbReference type="Gramene" id="OsIR64_09g0010540.01">
    <property type="protein sequence ID" value="OsIR64_09g0010540.01"/>
    <property type="gene ID" value="OsIR64_09g0010540"/>
</dbReference>
<dbReference type="Gramene" id="OsLaMu_09g0010310.01">
    <property type="protein sequence ID" value="OsLaMu_09g0010310.01"/>
    <property type="gene ID" value="OsLaMu_09g0010310"/>
</dbReference>
<dbReference type="Gramene" id="OsLima_09g0010510.01">
    <property type="protein sequence ID" value="OsLima_09g0010510.01"/>
    <property type="gene ID" value="OsLima_09g0010510"/>
</dbReference>
<dbReference type="Gramene" id="OsLiXu_09g0010250.01">
    <property type="protein sequence ID" value="OsLiXu_09g0010250.01"/>
    <property type="gene ID" value="OsLiXu_09g0010250"/>
</dbReference>
<dbReference type="Gramene" id="OsMH63_09G010890_01">
    <property type="protein sequence ID" value="OsMH63_09G010890_01"/>
    <property type="gene ID" value="OsMH63_09G010890"/>
</dbReference>
<dbReference type="Gramene" id="OsPr106_09g0010540.01">
    <property type="protein sequence ID" value="OsPr106_09g0010540.01"/>
    <property type="gene ID" value="OsPr106_09g0010540"/>
</dbReference>
<dbReference type="Gramene" id="OsZS97_09G010450_01">
    <property type="protein sequence ID" value="OsZS97_09G010450_01"/>
    <property type="gene ID" value="OsZS97_09G010450"/>
</dbReference>
<dbReference type="HOGENOM" id="CLU_047067_0_1_1"/>
<dbReference type="OMA" id="ANSCDAN"/>
<dbReference type="OrthoDB" id="1879341at2759"/>
<dbReference type="Proteomes" id="UP000007015">
    <property type="component" value="Chromosome 9"/>
</dbReference>
<dbReference type="GO" id="GO:0005634">
    <property type="term" value="C:nucleus"/>
    <property type="evidence" value="ECO:0007669"/>
    <property type="project" value="UniProtKB-SubCell"/>
</dbReference>
<dbReference type="GO" id="GO:0003700">
    <property type="term" value="F:DNA-binding transcription factor activity"/>
    <property type="evidence" value="ECO:0007669"/>
    <property type="project" value="InterPro"/>
</dbReference>
<dbReference type="GO" id="GO:0043565">
    <property type="term" value="F:sequence-specific DNA binding"/>
    <property type="evidence" value="ECO:0007669"/>
    <property type="project" value="InterPro"/>
</dbReference>
<dbReference type="GO" id="GO:0009617">
    <property type="term" value="P:response to bacterium"/>
    <property type="evidence" value="ECO:0000270"/>
    <property type="project" value="UniProtKB"/>
</dbReference>
<dbReference type="GO" id="GO:0010200">
    <property type="term" value="P:response to chitin"/>
    <property type="evidence" value="ECO:0000250"/>
    <property type="project" value="UniProtKB"/>
</dbReference>
<dbReference type="GO" id="GO:0009620">
    <property type="term" value="P:response to fungus"/>
    <property type="evidence" value="ECO:0000270"/>
    <property type="project" value="UniProtKB"/>
</dbReference>
<dbReference type="GO" id="GO:0009751">
    <property type="term" value="P:response to salicylic acid"/>
    <property type="evidence" value="ECO:0007669"/>
    <property type="project" value="EnsemblPlants"/>
</dbReference>
<dbReference type="FunFam" id="2.20.25.80:FF:000008">
    <property type="entry name" value="WRKY transcription factor 40"/>
    <property type="match status" value="1"/>
</dbReference>
<dbReference type="Gene3D" id="2.20.25.80">
    <property type="entry name" value="WRKY domain"/>
    <property type="match status" value="1"/>
</dbReference>
<dbReference type="InterPro" id="IPR003657">
    <property type="entry name" value="WRKY_dom"/>
</dbReference>
<dbReference type="InterPro" id="IPR036576">
    <property type="entry name" value="WRKY_dom_sf"/>
</dbReference>
<dbReference type="InterPro" id="IPR044810">
    <property type="entry name" value="WRKY_plant"/>
</dbReference>
<dbReference type="PANTHER" id="PTHR31429">
    <property type="entry name" value="WRKY TRANSCRIPTION FACTOR 36-RELATED"/>
    <property type="match status" value="1"/>
</dbReference>
<dbReference type="PANTHER" id="PTHR31429:SF3">
    <property type="entry name" value="WRKY TRANSCRIPTION FACTOR 40-RELATED"/>
    <property type="match status" value="1"/>
</dbReference>
<dbReference type="Pfam" id="PF03106">
    <property type="entry name" value="WRKY"/>
    <property type="match status" value="1"/>
</dbReference>
<dbReference type="SMART" id="SM00774">
    <property type="entry name" value="WRKY"/>
    <property type="match status" value="1"/>
</dbReference>
<dbReference type="SUPFAM" id="SSF118290">
    <property type="entry name" value="WRKY DNA-binding domain"/>
    <property type="match status" value="1"/>
</dbReference>
<dbReference type="PROSITE" id="PS50811">
    <property type="entry name" value="WRKY"/>
    <property type="match status" value="1"/>
</dbReference>
<name>WRK76_ORYSI</name>